<name>RL13_PSESM</name>
<dbReference type="EMBL" id="AE016853">
    <property type="protein sequence ID" value="AAO57875.1"/>
    <property type="molecule type" value="Genomic_DNA"/>
</dbReference>
<dbReference type="RefSeq" id="NP_794180.1">
    <property type="nucleotide sequence ID" value="NC_004578.1"/>
</dbReference>
<dbReference type="RefSeq" id="WP_003377605.1">
    <property type="nucleotide sequence ID" value="NC_004578.1"/>
</dbReference>
<dbReference type="SMR" id="Q87WW7"/>
<dbReference type="STRING" id="223283.PSPTO_4426"/>
<dbReference type="GeneID" id="61790755"/>
<dbReference type="KEGG" id="pst:PSPTO_4426"/>
<dbReference type="PATRIC" id="fig|223283.9.peg.4541"/>
<dbReference type="eggNOG" id="COG0102">
    <property type="taxonomic scope" value="Bacteria"/>
</dbReference>
<dbReference type="HOGENOM" id="CLU_082184_2_2_6"/>
<dbReference type="OrthoDB" id="9801330at2"/>
<dbReference type="PhylomeDB" id="Q87WW7"/>
<dbReference type="Proteomes" id="UP000002515">
    <property type="component" value="Chromosome"/>
</dbReference>
<dbReference type="GO" id="GO:0022625">
    <property type="term" value="C:cytosolic large ribosomal subunit"/>
    <property type="evidence" value="ECO:0007669"/>
    <property type="project" value="TreeGrafter"/>
</dbReference>
<dbReference type="GO" id="GO:0003729">
    <property type="term" value="F:mRNA binding"/>
    <property type="evidence" value="ECO:0007669"/>
    <property type="project" value="TreeGrafter"/>
</dbReference>
<dbReference type="GO" id="GO:0003735">
    <property type="term" value="F:structural constituent of ribosome"/>
    <property type="evidence" value="ECO:0007669"/>
    <property type="project" value="InterPro"/>
</dbReference>
<dbReference type="GO" id="GO:0017148">
    <property type="term" value="P:negative regulation of translation"/>
    <property type="evidence" value="ECO:0007669"/>
    <property type="project" value="TreeGrafter"/>
</dbReference>
<dbReference type="GO" id="GO:0006412">
    <property type="term" value="P:translation"/>
    <property type="evidence" value="ECO:0007669"/>
    <property type="project" value="UniProtKB-UniRule"/>
</dbReference>
<dbReference type="CDD" id="cd00392">
    <property type="entry name" value="Ribosomal_L13"/>
    <property type="match status" value="1"/>
</dbReference>
<dbReference type="FunFam" id="3.90.1180.10:FF:000001">
    <property type="entry name" value="50S ribosomal protein L13"/>
    <property type="match status" value="1"/>
</dbReference>
<dbReference type="Gene3D" id="3.90.1180.10">
    <property type="entry name" value="Ribosomal protein L13"/>
    <property type="match status" value="1"/>
</dbReference>
<dbReference type="HAMAP" id="MF_01366">
    <property type="entry name" value="Ribosomal_uL13"/>
    <property type="match status" value="1"/>
</dbReference>
<dbReference type="InterPro" id="IPR005822">
    <property type="entry name" value="Ribosomal_uL13"/>
</dbReference>
<dbReference type="InterPro" id="IPR005823">
    <property type="entry name" value="Ribosomal_uL13_bac-type"/>
</dbReference>
<dbReference type="InterPro" id="IPR023563">
    <property type="entry name" value="Ribosomal_uL13_CS"/>
</dbReference>
<dbReference type="InterPro" id="IPR036899">
    <property type="entry name" value="Ribosomal_uL13_sf"/>
</dbReference>
<dbReference type="NCBIfam" id="TIGR01066">
    <property type="entry name" value="rplM_bact"/>
    <property type="match status" value="1"/>
</dbReference>
<dbReference type="PANTHER" id="PTHR11545:SF2">
    <property type="entry name" value="LARGE RIBOSOMAL SUBUNIT PROTEIN UL13M"/>
    <property type="match status" value="1"/>
</dbReference>
<dbReference type="PANTHER" id="PTHR11545">
    <property type="entry name" value="RIBOSOMAL PROTEIN L13"/>
    <property type="match status" value="1"/>
</dbReference>
<dbReference type="Pfam" id="PF00572">
    <property type="entry name" value="Ribosomal_L13"/>
    <property type="match status" value="1"/>
</dbReference>
<dbReference type="PIRSF" id="PIRSF002181">
    <property type="entry name" value="Ribosomal_L13"/>
    <property type="match status" value="1"/>
</dbReference>
<dbReference type="SUPFAM" id="SSF52161">
    <property type="entry name" value="Ribosomal protein L13"/>
    <property type="match status" value="1"/>
</dbReference>
<dbReference type="PROSITE" id="PS00783">
    <property type="entry name" value="RIBOSOMAL_L13"/>
    <property type="match status" value="1"/>
</dbReference>
<feature type="chain" id="PRO_0000261775" description="Large ribosomal subunit protein uL13">
    <location>
        <begin position="1"/>
        <end position="142"/>
    </location>
</feature>
<keyword id="KW-1185">Reference proteome</keyword>
<keyword id="KW-0687">Ribonucleoprotein</keyword>
<keyword id="KW-0689">Ribosomal protein</keyword>
<comment type="function">
    <text evidence="1">This protein is one of the early assembly proteins of the 50S ribosomal subunit, although it is not seen to bind rRNA by itself. It is important during the early stages of 50S assembly.</text>
</comment>
<comment type="subunit">
    <text evidence="1">Part of the 50S ribosomal subunit.</text>
</comment>
<comment type="similarity">
    <text evidence="1">Belongs to the universal ribosomal protein uL13 family.</text>
</comment>
<sequence length="142" mass="15863">MKTFTAKPETVKRDWFVVDAAGQTLGRLATEIASRLRGKHKPEYTPHVDTGDYIVVINAEQIRVTGAKTTDKIYYSHSGFPGGIKSINFEKLIAKAPERVIETAVKGMLPKNPLGRDMYRKLKVYAGAVHPHTAQQPLELKF</sequence>
<protein>
    <recommendedName>
        <fullName evidence="1">Large ribosomal subunit protein uL13</fullName>
    </recommendedName>
    <alternativeName>
        <fullName evidence="2">50S ribosomal protein L13</fullName>
    </alternativeName>
</protein>
<evidence type="ECO:0000255" key="1">
    <source>
        <dbReference type="HAMAP-Rule" id="MF_01366"/>
    </source>
</evidence>
<evidence type="ECO:0000305" key="2"/>
<organism>
    <name type="scientific">Pseudomonas syringae pv. tomato (strain ATCC BAA-871 / DC3000)</name>
    <dbReference type="NCBI Taxonomy" id="223283"/>
    <lineage>
        <taxon>Bacteria</taxon>
        <taxon>Pseudomonadati</taxon>
        <taxon>Pseudomonadota</taxon>
        <taxon>Gammaproteobacteria</taxon>
        <taxon>Pseudomonadales</taxon>
        <taxon>Pseudomonadaceae</taxon>
        <taxon>Pseudomonas</taxon>
    </lineage>
</organism>
<accession>Q87WW7</accession>
<gene>
    <name evidence="1" type="primary">rplM</name>
    <name type="ordered locus">PSPTO_4426</name>
</gene>
<proteinExistence type="inferred from homology"/>
<reference key="1">
    <citation type="journal article" date="2003" name="Proc. Natl. Acad. Sci. U.S.A.">
        <title>The complete genome sequence of the Arabidopsis and tomato pathogen Pseudomonas syringae pv. tomato DC3000.</title>
        <authorList>
            <person name="Buell C.R."/>
            <person name="Joardar V."/>
            <person name="Lindeberg M."/>
            <person name="Selengut J."/>
            <person name="Paulsen I.T."/>
            <person name="Gwinn M.L."/>
            <person name="Dodson R.J."/>
            <person name="DeBoy R.T."/>
            <person name="Durkin A.S."/>
            <person name="Kolonay J.F."/>
            <person name="Madupu R."/>
            <person name="Daugherty S.C."/>
            <person name="Brinkac L.M."/>
            <person name="Beanan M.J."/>
            <person name="Haft D.H."/>
            <person name="Nelson W.C."/>
            <person name="Davidsen T.M."/>
            <person name="Zafar N."/>
            <person name="Zhou L."/>
            <person name="Liu J."/>
            <person name="Yuan Q."/>
            <person name="Khouri H.M."/>
            <person name="Fedorova N.B."/>
            <person name="Tran B."/>
            <person name="Russell D."/>
            <person name="Berry K.J."/>
            <person name="Utterback T.R."/>
            <person name="Van Aken S.E."/>
            <person name="Feldblyum T.V."/>
            <person name="D'Ascenzo M."/>
            <person name="Deng W.-L."/>
            <person name="Ramos A.R."/>
            <person name="Alfano J.R."/>
            <person name="Cartinhour S."/>
            <person name="Chatterjee A.K."/>
            <person name="Delaney T.P."/>
            <person name="Lazarowitz S.G."/>
            <person name="Martin G.B."/>
            <person name="Schneider D.J."/>
            <person name="Tang X."/>
            <person name="Bender C.L."/>
            <person name="White O."/>
            <person name="Fraser C.M."/>
            <person name="Collmer A."/>
        </authorList>
    </citation>
    <scope>NUCLEOTIDE SEQUENCE [LARGE SCALE GENOMIC DNA]</scope>
    <source>
        <strain>ATCC BAA-871 / DC3000</strain>
    </source>
</reference>